<dbReference type="EMBL" id="CP000115">
    <property type="protein sequence ID" value="ABA03397.1"/>
    <property type="molecule type" value="Genomic_DNA"/>
</dbReference>
<dbReference type="RefSeq" id="WP_011313466.1">
    <property type="nucleotide sequence ID" value="NC_007406.1"/>
</dbReference>
<dbReference type="SMR" id="Q3SWE4"/>
<dbReference type="STRING" id="323098.Nwi_0129"/>
<dbReference type="KEGG" id="nwi:Nwi_0129"/>
<dbReference type="eggNOG" id="COG1220">
    <property type="taxonomic scope" value="Bacteria"/>
</dbReference>
<dbReference type="HOGENOM" id="CLU_033123_0_0_5"/>
<dbReference type="OrthoDB" id="9804062at2"/>
<dbReference type="Proteomes" id="UP000002531">
    <property type="component" value="Chromosome"/>
</dbReference>
<dbReference type="GO" id="GO:0009376">
    <property type="term" value="C:HslUV protease complex"/>
    <property type="evidence" value="ECO:0007669"/>
    <property type="project" value="UniProtKB-UniRule"/>
</dbReference>
<dbReference type="GO" id="GO:0005524">
    <property type="term" value="F:ATP binding"/>
    <property type="evidence" value="ECO:0007669"/>
    <property type="project" value="UniProtKB-UniRule"/>
</dbReference>
<dbReference type="GO" id="GO:0016887">
    <property type="term" value="F:ATP hydrolysis activity"/>
    <property type="evidence" value="ECO:0007669"/>
    <property type="project" value="InterPro"/>
</dbReference>
<dbReference type="GO" id="GO:0008233">
    <property type="term" value="F:peptidase activity"/>
    <property type="evidence" value="ECO:0007669"/>
    <property type="project" value="InterPro"/>
</dbReference>
<dbReference type="GO" id="GO:0036402">
    <property type="term" value="F:proteasome-activating activity"/>
    <property type="evidence" value="ECO:0007669"/>
    <property type="project" value="UniProtKB-UniRule"/>
</dbReference>
<dbReference type="GO" id="GO:0043335">
    <property type="term" value="P:protein unfolding"/>
    <property type="evidence" value="ECO:0007669"/>
    <property type="project" value="UniProtKB-UniRule"/>
</dbReference>
<dbReference type="GO" id="GO:0051603">
    <property type="term" value="P:proteolysis involved in protein catabolic process"/>
    <property type="evidence" value="ECO:0007669"/>
    <property type="project" value="TreeGrafter"/>
</dbReference>
<dbReference type="CDD" id="cd19498">
    <property type="entry name" value="RecA-like_HslU"/>
    <property type="match status" value="1"/>
</dbReference>
<dbReference type="FunFam" id="3.40.50.300:FF:000213">
    <property type="entry name" value="ATP-dependent protease ATPase subunit HslU"/>
    <property type="match status" value="1"/>
</dbReference>
<dbReference type="FunFam" id="3.40.50.300:FF:000220">
    <property type="entry name" value="ATP-dependent protease ATPase subunit HslU"/>
    <property type="match status" value="1"/>
</dbReference>
<dbReference type="Gene3D" id="1.10.8.60">
    <property type="match status" value="1"/>
</dbReference>
<dbReference type="Gene3D" id="3.40.50.300">
    <property type="entry name" value="P-loop containing nucleotide triphosphate hydrolases"/>
    <property type="match status" value="2"/>
</dbReference>
<dbReference type="HAMAP" id="MF_00249">
    <property type="entry name" value="HslU"/>
    <property type="match status" value="1"/>
</dbReference>
<dbReference type="InterPro" id="IPR003593">
    <property type="entry name" value="AAA+_ATPase"/>
</dbReference>
<dbReference type="InterPro" id="IPR050052">
    <property type="entry name" value="ATP-dep_Clp_protease_ClpX"/>
</dbReference>
<dbReference type="InterPro" id="IPR003959">
    <property type="entry name" value="ATPase_AAA_core"/>
</dbReference>
<dbReference type="InterPro" id="IPR019489">
    <property type="entry name" value="Clp_ATPase_C"/>
</dbReference>
<dbReference type="InterPro" id="IPR004491">
    <property type="entry name" value="HslU"/>
</dbReference>
<dbReference type="InterPro" id="IPR027417">
    <property type="entry name" value="P-loop_NTPase"/>
</dbReference>
<dbReference type="NCBIfam" id="TIGR00390">
    <property type="entry name" value="hslU"/>
    <property type="match status" value="1"/>
</dbReference>
<dbReference type="NCBIfam" id="NF003544">
    <property type="entry name" value="PRK05201.1"/>
    <property type="match status" value="1"/>
</dbReference>
<dbReference type="PANTHER" id="PTHR48102">
    <property type="entry name" value="ATP-DEPENDENT CLP PROTEASE ATP-BINDING SUBUNIT CLPX-LIKE, MITOCHONDRIAL-RELATED"/>
    <property type="match status" value="1"/>
</dbReference>
<dbReference type="PANTHER" id="PTHR48102:SF3">
    <property type="entry name" value="ATP-DEPENDENT PROTEASE ATPASE SUBUNIT HSLU"/>
    <property type="match status" value="1"/>
</dbReference>
<dbReference type="Pfam" id="PF00004">
    <property type="entry name" value="AAA"/>
    <property type="match status" value="1"/>
</dbReference>
<dbReference type="Pfam" id="PF07724">
    <property type="entry name" value="AAA_2"/>
    <property type="match status" value="1"/>
</dbReference>
<dbReference type="SMART" id="SM00382">
    <property type="entry name" value="AAA"/>
    <property type="match status" value="1"/>
</dbReference>
<dbReference type="SMART" id="SM01086">
    <property type="entry name" value="ClpB_D2-small"/>
    <property type="match status" value="1"/>
</dbReference>
<dbReference type="SUPFAM" id="SSF52540">
    <property type="entry name" value="P-loop containing nucleoside triphosphate hydrolases"/>
    <property type="match status" value="1"/>
</dbReference>
<accession>Q3SWE4</accession>
<evidence type="ECO:0000255" key="1">
    <source>
        <dbReference type="HAMAP-Rule" id="MF_00249"/>
    </source>
</evidence>
<proteinExistence type="inferred from homology"/>
<comment type="function">
    <text evidence="1">ATPase subunit of a proteasome-like degradation complex; this subunit has chaperone activity. The binding of ATP and its subsequent hydrolysis by HslU are essential for unfolding of protein substrates subsequently hydrolyzed by HslV. HslU recognizes the N-terminal part of its protein substrates and unfolds these before they are guided to HslV for hydrolysis.</text>
</comment>
<comment type="subunit">
    <text evidence="1">A double ring-shaped homohexamer of HslV is capped on each side by a ring-shaped HslU homohexamer. The assembly of the HslU/HslV complex is dependent on binding of ATP.</text>
</comment>
<comment type="subcellular location">
    <subcellularLocation>
        <location evidence="1">Cytoplasm</location>
    </subcellularLocation>
</comment>
<comment type="similarity">
    <text evidence="1">Belongs to the ClpX chaperone family. HslU subfamily.</text>
</comment>
<protein>
    <recommendedName>
        <fullName evidence="1">ATP-dependent protease ATPase subunit HslU</fullName>
    </recommendedName>
    <alternativeName>
        <fullName evidence="1">Unfoldase HslU</fullName>
    </alternativeName>
</protein>
<organism>
    <name type="scientific">Nitrobacter winogradskyi (strain ATCC 25391 / DSM 10237 / CIP 104748 / NCIMB 11846 / Nb-255)</name>
    <dbReference type="NCBI Taxonomy" id="323098"/>
    <lineage>
        <taxon>Bacteria</taxon>
        <taxon>Pseudomonadati</taxon>
        <taxon>Pseudomonadota</taxon>
        <taxon>Alphaproteobacteria</taxon>
        <taxon>Hyphomicrobiales</taxon>
        <taxon>Nitrobacteraceae</taxon>
        <taxon>Nitrobacter</taxon>
    </lineage>
</organism>
<reference key="1">
    <citation type="journal article" date="2006" name="Appl. Environ. Microbiol.">
        <title>Genome sequence of the chemolithoautotrophic nitrite-oxidizing bacterium Nitrobacter winogradskyi Nb-255.</title>
        <authorList>
            <person name="Starkenburg S.R."/>
            <person name="Chain P.S.G."/>
            <person name="Sayavedra-Soto L.A."/>
            <person name="Hauser L."/>
            <person name="Land M.L."/>
            <person name="Larimer F.W."/>
            <person name="Malfatti S.A."/>
            <person name="Klotz M.G."/>
            <person name="Bottomley P.J."/>
            <person name="Arp D.J."/>
            <person name="Hickey W.J."/>
        </authorList>
    </citation>
    <scope>NUCLEOTIDE SEQUENCE [LARGE SCALE GENOMIC DNA]</scope>
    <source>
        <strain>ATCC 25391 / DSM 10237 / CIP 104748 / NCIMB 11846 / Nb-255</strain>
    </source>
</reference>
<name>HSLU_NITWN</name>
<keyword id="KW-0067">ATP-binding</keyword>
<keyword id="KW-0143">Chaperone</keyword>
<keyword id="KW-0963">Cytoplasm</keyword>
<keyword id="KW-0547">Nucleotide-binding</keyword>
<keyword id="KW-1185">Reference proteome</keyword>
<keyword id="KW-0346">Stress response</keyword>
<sequence>MTDISPREIVSELDRFIVGQADAKRAVSIALRNRWRRQQLTGPLREEVLPKNILMIGPTGVGKTEIARRLAKLANAPFLKIEATKFTEVGYVGRDVEQIVRDIVEVAINQTRERKRKDVQARAQLAAEERVLDALVGANASAATRDSFRKRLRSGELNDKEIEIETQTSGGGPMFEIPGMPGAQVGAISIGDIFGKMGGRTKTRRLTVSDSYEILINEESDKLLDSDQLTQEAIAAVENNGIVFLDEIDKICVRDGRSGGDVSREGVQRDLLPLIEGTTVSTKHGAVKTDHILFIASGAFHIAKPSDLLPELQGRLPIRVELDALTRDDLRRILTEPEASLIKQYVALMDTEGVVLDFTDDAVDALADIAVAVNSTVENIGARRLQTVMERVLDDISFTAPDRNGETVRIDAGYVQKNIGDLAKNADLSRFIL</sequence>
<gene>
    <name evidence="1" type="primary">hslU</name>
    <name type="ordered locus">Nwi_0129</name>
</gene>
<feature type="chain" id="PRO_1000012765" description="ATP-dependent protease ATPase subunit HslU">
    <location>
        <begin position="1"/>
        <end position="433"/>
    </location>
</feature>
<feature type="binding site" evidence="1">
    <location>
        <position position="18"/>
    </location>
    <ligand>
        <name>ATP</name>
        <dbReference type="ChEBI" id="CHEBI:30616"/>
    </ligand>
</feature>
<feature type="binding site" evidence="1">
    <location>
        <begin position="60"/>
        <end position="65"/>
    </location>
    <ligand>
        <name>ATP</name>
        <dbReference type="ChEBI" id="CHEBI:30616"/>
    </ligand>
</feature>
<feature type="binding site" evidence="1">
    <location>
        <position position="246"/>
    </location>
    <ligand>
        <name>ATP</name>
        <dbReference type="ChEBI" id="CHEBI:30616"/>
    </ligand>
</feature>
<feature type="binding site" evidence="1">
    <location>
        <position position="311"/>
    </location>
    <ligand>
        <name>ATP</name>
        <dbReference type="ChEBI" id="CHEBI:30616"/>
    </ligand>
</feature>
<feature type="binding site" evidence="1">
    <location>
        <position position="383"/>
    </location>
    <ligand>
        <name>ATP</name>
        <dbReference type="ChEBI" id="CHEBI:30616"/>
    </ligand>
</feature>